<evidence type="ECO:0000255" key="1">
    <source>
        <dbReference type="HAMAP-Rule" id="MF_01369"/>
    </source>
</evidence>
<evidence type="ECO:0000305" key="2"/>
<comment type="function">
    <text evidence="1">One of the early assembly proteins it binds 23S rRNA. One of the proteins that surrounds the polypeptide exit tunnel on the outside of the ribosome. Forms the main docking site for trigger factor binding to the ribosome.</text>
</comment>
<comment type="subunit">
    <text evidence="1">Part of the 50S ribosomal subunit. Contacts protein L29, and trigger factor when it is bound to the ribosome.</text>
</comment>
<comment type="similarity">
    <text evidence="1">Belongs to the universal ribosomal protein uL23 family.</text>
</comment>
<reference key="1">
    <citation type="submission" date="2006-12" db="EMBL/GenBank/DDBJ databases">
        <title>Complete sequence of Halorhodospira halophila SL1.</title>
        <authorList>
            <consortium name="US DOE Joint Genome Institute"/>
            <person name="Copeland A."/>
            <person name="Lucas S."/>
            <person name="Lapidus A."/>
            <person name="Barry K."/>
            <person name="Detter J.C."/>
            <person name="Glavina del Rio T."/>
            <person name="Hammon N."/>
            <person name="Israni S."/>
            <person name="Dalin E."/>
            <person name="Tice H."/>
            <person name="Pitluck S."/>
            <person name="Saunders E."/>
            <person name="Brettin T."/>
            <person name="Bruce D."/>
            <person name="Han C."/>
            <person name="Tapia R."/>
            <person name="Schmutz J."/>
            <person name="Larimer F."/>
            <person name="Land M."/>
            <person name="Hauser L."/>
            <person name="Kyrpides N."/>
            <person name="Mikhailova N."/>
            <person name="Hoff W."/>
            <person name="Richardson P."/>
        </authorList>
    </citation>
    <scope>NUCLEOTIDE SEQUENCE [LARGE SCALE GENOMIC DNA]</scope>
    <source>
        <strain>DSM 244 / SL1</strain>
    </source>
</reference>
<dbReference type="EMBL" id="CP000544">
    <property type="protein sequence ID" value="ABM61632.1"/>
    <property type="molecule type" value="Genomic_DNA"/>
</dbReference>
<dbReference type="RefSeq" id="WP_011813655.1">
    <property type="nucleotide sequence ID" value="NC_008789.1"/>
</dbReference>
<dbReference type="SMR" id="A1WVC0"/>
<dbReference type="STRING" id="349124.Hhal_0856"/>
<dbReference type="KEGG" id="hha:Hhal_0856"/>
<dbReference type="eggNOG" id="COG0089">
    <property type="taxonomic scope" value="Bacteria"/>
</dbReference>
<dbReference type="HOGENOM" id="CLU_037562_3_1_6"/>
<dbReference type="OrthoDB" id="9793353at2"/>
<dbReference type="Proteomes" id="UP000000647">
    <property type="component" value="Chromosome"/>
</dbReference>
<dbReference type="GO" id="GO:1990904">
    <property type="term" value="C:ribonucleoprotein complex"/>
    <property type="evidence" value="ECO:0007669"/>
    <property type="project" value="UniProtKB-KW"/>
</dbReference>
<dbReference type="GO" id="GO:0005840">
    <property type="term" value="C:ribosome"/>
    <property type="evidence" value="ECO:0007669"/>
    <property type="project" value="UniProtKB-KW"/>
</dbReference>
<dbReference type="GO" id="GO:0019843">
    <property type="term" value="F:rRNA binding"/>
    <property type="evidence" value="ECO:0007669"/>
    <property type="project" value="UniProtKB-UniRule"/>
</dbReference>
<dbReference type="GO" id="GO:0003735">
    <property type="term" value="F:structural constituent of ribosome"/>
    <property type="evidence" value="ECO:0007669"/>
    <property type="project" value="InterPro"/>
</dbReference>
<dbReference type="GO" id="GO:0006412">
    <property type="term" value="P:translation"/>
    <property type="evidence" value="ECO:0007669"/>
    <property type="project" value="UniProtKB-UniRule"/>
</dbReference>
<dbReference type="FunFam" id="3.30.70.330:FF:000001">
    <property type="entry name" value="50S ribosomal protein L23"/>
    <property type="match status" value="1"/>
</dbReference>
<dbReference type="Gene3D" id="3.30.70.330">
    <property type="match status" value="1"/>
</dbReference>
<dbReference type="HAMAP" id="MF_01369_B">
    <property type="entry name" value="Ribosomal_uL23_B"/>
    <property type="match status" value="1"/>
</dbReference>
<dbReference type="InterPro" id="IPR012677">
    <property type="entry name" value="Nucleotide-bd_a/b_plait_sf"/>
</dbReference>
<dbReference type="InterPro" id="IPR013025">
    <property type="entry name" value="Ribosomal_uL23-like"/>
</dbReference>
<dbReference type="InterPro" id="IPR012678">
    <property type="entry name" value="Ribosomal_uL23/eL15/eS24_sf"/>
</dbReference>
<dbReference type="InterPro" id="IPR001014">
    <property type="entry name" value="Ribosomal_uL23_CS"/>
</dbReference>
<dbReference type="NCBIfam" id="NF004358">
    <property type="entry name" value="PRK05738.1-1"/>
    <property type="match status" value="1"/>
</dbReference>
<dbReference type="NCBIfam" id="NF004359">
    <property type="entry name" value="PRK05738.1-3"/>
    <property type="match status" value="1"/>
</dbReference>
<dbReference type="NCBIfam" id="NF004363">
    <property type="entry name" value="PRK05738.2-4"/>
    <property type="match status" value="1"/>
</dbReference>
<dbReference type="NCBIfam" id="NF004366">
    <property type="entry name" value="PRK05738.3-2"/>
    <property type="match status" value="1"/>
</dbReference>
<dbReference type="PANTHER" id="PTHR11620">
    <property type="entry name" value="60S RIBOSOMAL PROTEIN L23A"/>
    <property type="match status" value="1"/>
</dbReference>
<dbReference type="Pfam" id="PF00276">
    <property type="entry name" value="Ribosomal_L23"/>
    <property type="match status" value="1"/>
</dbReference>
<dbReference type="SUPFAM" id="SSF54189">
    <property type="entry name" value="Ribosomal proteins S24e, L23 and L15e"/>
    <property type="match status" value="1"/>
</dbReference>
<dbReference type="PROSITE" id="PS00050">
    <property type="entry name" value="RIBOSOMAL_L23"/>
    <property type="match status" value="1"/>
</dbReference>
<feature type="chain" id="PRO_1000068085" description="Large ribosomal subunit protein uL23">
    <location>
        <begin position="1"/>
        <end position="98"/>
    </location>
</feature>
<proteinExistence type="inferred from homology"/>
<sequence>MNQERLYTVLRGPHISEKSTVIADGAGQVVFQVAPDANKKEIKAAVEKLFDVQVTGVRTVNAKGKRKRFGMIRGRRRDWKKAYVTLAEGQDIDFLGGE</sequence>
<protein>
    <recommendedName>
        <fullName evidence="1">Large ribosomal subunit protein uL23</fullName>
    </recommendedName>
    <alternativeName>
        <fullName evidence="2">50S ribosomal protein L23</fullName>
    </alternativeName>
</protein>
<accession>A1WVC0</accession>
<name>RL23_HALHL</name>
<keyword id="KW-1185">Reference proteome</keyword>
<keyword id="KW-0687">Ribonucleoprotein</keyword>
<keyword id="KW-0689">Ribosomal protein</keyword>
<keyword id="KW-0694">RNA-binding</keyword>
<keyword id="KW-0699">rRNA-binding</keyword>
<organism>
    <name type="scientific">Halorhodospira halophila (strain DSM 244 / SL1)</name>
    <name type="common">Ectothiorhodospira halophila (strain DSM 244 / SL1)</name>
    <dbReference type="NCBI Taxonomy" id="349124"/>
    <lineage>
        <taxon>Bacteria</taxon>
        <taxon>Pseudomonadati</taxon>
        <taxon>Pseudomonadota</taxon>
        <taxon>Gammaproteobacteria</taxon>
        <taxon>Chromatiales</taxon>
        <taxon>Ectothiorhodospiraceae</taxon>
        <taxon>Halorhodospira</taxon>
    </lineage>
</organism>
<gene>
    <name evidence="1" type="primary">rplW</name>
    <name type="ordered locus">Hhal_0856</name>
</gene>